<dbReference type="EC" id="6.1.1.20" evidence="1"/>
<dbReference type="EMBL" id="AE017221">
    <property type="protein sequence ID" value="AAS81937.1"/>
    <property type="molecule type" value="Genomic_DNA"/>
</dbReference>
<dbReference type="RefSeq" id="WP_011173966.1">
    <property type="nucleotide sequence ID" value="NC_005835.1"/>
</dbReference>
<dbReference type="SMR" id="Q72HA0"/>
<dbReference type="KEGG" id="tth:TT_C1595"/>
<dbReference type="eggNOG" id="COG0072">
    <property type="taxonomic scope" value="Bacteria"/>
</dbReference>
<dbReference type="eggNOG" id="COG0073">
    <property type="taxonomic scope" value="Bacteria"/>
</dbReference>
<dbReference type="HOGENOM" id="CLU_016891_0_0_0"/>
<dbReference type="OrthoDB" id="9805455at2"/>
<dbReference type="Proteomes" id="UP000000592">
    <property type="component" value="Chromosome"/>
</dbReference>
<dbReference type="GO" id="GO:0009328">
    <property type="term" value="C:phenylalanine-tRNA ligase complex"/>
    <property type="evidence" value="ECO:0007669"/>
    <property type="project" value="TreeGrafter"/>
</dbReference>
<dbReference type="GO" id="GO:0005524">
    <property type="term" value="F:ATP binding"/>
    <property type="evidence" value="ECO:0007669"/>
    <property type="project" value="UniProtKB-UniRule"/>
</dbReference>
<dbReference type="GO" id="GO:0000287">
    <property type="term" value="F:magnesium ion binding"/>
    <property type="evidence" value="ECO:0007669"/>
    <property type="project" value="UniProtKB-UniRule"/>
</dbReference>
<dbReference type="GO" id="GO:0004826">
    <property type="term" value="F:phenylalanine-tRNA ligase activity"/>
    <property type="evidence" value="ECO:0007669"/>
    <property type="project" value="UniProtKB-UniRule"/>
</dbReference>
<dbReference type="GO" id="GO:0000049">
    <property type="term" value="F:tRNA binding"/>
    <property type="evidence" value="ECO:0007669"/>
    <property type="project" value="UniProtKB-KW"/>
</dbReference>
<dbReference type="GO" id="GO:0006432">
    <property type="term" value="P:phenylalanyl-tRNA aminoacylation"/>
    <property type="evidence" value="ECO:0007669"/>
    <property type="project" value="UniProtKB-UniRule"/>
</dbReference>
<dbReference type="CDD" id="cd00769">
    <property type="entry name" value="PheRS_beta_core"/>
    <property type="match status" value="1"/>
</dbReference>
<dbReference type="CDD" id="cd02796">
    <property type="entry name" value="tRNA_bind_bactPheRS"/>
    <property type="match status" value="1"/>
</dbReference>
<dbReference type="FunFam" id="3.30.56.10:FF:000002">
    <property type="entry name" value="Phenylalanine--tRNA ligase beta subunit"/>
    <property type="match status" value="1"/>
</dbReference>
<dbReference type="FunFam" id="3.30.70.380:FF:000001">
    <property type="entry name" value="Phenylalanine--tRNA ligase beta subunit"/>
    <property type="match status" value="1"/>
</dbReference>
<dbReference type="FunFam" id="3.50.40.10:FF:000001">
    <property type="entry name" value="Phenylalanine--tRNA ligase beta subunit"/>
    <property type="match status" value="1"/>
</dbReference>
<dbReference type="Gene3D" id="3.30.56.10">
    <property type="match status" value="2"/>
</dbReference>
<dbReference type="Gene3D" id="3.30.930.10">
    <property type="entry name" value="Bira Bifunctional Protein, Domain 2"/>
    <property type="match status" value="1"/>
</dbReference>
<dbReference type="Gene3D" id="3.30.70.380">
    <property type="entry name" value="Ferrodoxin-fold anticodon-binding domain"/>
    <property type="match status" value="1"/>
</dbReference>
<dbReference type="Gene3D" id="2.40.50.140">
    <property type="entry name" value="Nucleic acid-binding proteins"/>
    <property type="match status" value="1"/>
</dbReference>
<dbReference type="Gene3D" id="3.50.40.10">
    <property type="entry name" value="Phenylalanyl-trna Synthetase, Chain B, domain 3"/>
    <property type="match status" value="1"/>
</dbReference>
<dbReference type="HAMAP" id="MF_00283">
    <property type="entry name" value="Phe_tRNA_synth_beta1"/>
    <property type="match status" value="1"/>
</dbReference>
<dbReference type="InterPro" id="IPR045864">
    <property type="entry name" value="aa-tRNA-synth_II/BPL/LPL"/>
</dbReference>
<dbReference type="InterPro" id="IPR005146">
    <property type="entry name" value="B3/B4_tRNA-bd"/>
</dbReference>
<dbReference type="InterPro" id="IPR009061">
    <property type="entry name" value="DNA-bd_dom_put_sf"/>
</dbReference>
<dbReference type="InterPro" id="IPR005121">
    <property type="entry name" value="Fdx_antiC-bd"/>
</dbReference>
<dbReference type="InterPro" id="IPR036690">
    <property type="entry name" value="Fdx_antiC-bd_sf"/>
</dbReference>
<dbReference type="InterPro" id="IPR012340">
    <property type="entry name" value="NA-bd_OB-fold"/>
</dbReference>
<dbReference type="InterPro" id="IPR045060">
    <property type="entry name" value="Phe-tRNA-ligase_IIc_bsu"/>
</dbReference>
<dbReference type="InterPro" id="IPR004532">
    <property type="entry name" value="Phe-tRNA-ligase_IIc_bsu_bact"/>
</dbReference>
<dbReference type="InterPro" id="IPR020825">
    <property type="entry name" value="Phe-tRNA_synthase-like_B3/B4"/>
</dbReference>
<dbReference type="InterPro" id="IPR041616">
    <property type="entry name" value="PheRS_beta_core"/>
</dbReference>
<dbReference type="InterPro" id="IPR002547">
    <property type="entry name" value="tRNA-bd_dom"/>
</dbReference>
<dbReference type="InterPro" id="IPR033714">
    <property type="entry name" value="tRNA_bind_bactPheRS"/>
</dbReference>
<dbReference type="InterPro" id="IPR005147">
    <property type="entry name" value="tRNA_synthase_B5-dom"/>
</dbReference>
<dbReference type="NCBIfam" id="TIGR00472">
    <property type="entry name" value="pheT_bact"/>
    <property type="match status" value="1"/>
</dbReference>
<dbReference type="PANTHER" id="PTHR10947:SF0">
    <property type="entry name" value="PHENYLALANINE--TRNA LIGASE BETA SUBUNIT"/>
    <property type="match status" value="1"/>
</dbReference>
<dbReference type="PANTHER" id="PTHR10947">
    <property type="entry name" value="PHENYLALANYL-TRNA SYNTHETASE BETA CHAIN AND LEUCINE-RICH REPEAT-CONTAINING PROTEIN 47"/>
    <property type="match status" value="1"/>
</dbReference>
<dbReference type="Pfam" id="PF03483">
    <property type="entry name" value="B3_4"/>
    <property type="match status" value="1"/>
</dbReference>
<dbReference type="Pfam" id="PF03484">
    <property type="entry name" value="B5"/>
    <property type="match status" value="1"/>
</dbReference>
<dbReference type="Pfam" id="PF03147">
    <property type="entry name" value="FDX-ACB"/>
    <property type="match status" value="1"/>
</dbReference>
<dbReference type="Pfam" id="PF17759">
    <property type="entry name" value="tRNA_synthFbeta"/>
    <property type="match status" value="1"/>
</dbReference>
<dbReference type="SMART" id="SM00873">
    <property type="entry name" value="B3_4"/>
    <property type="match status" value="1"/>
</dbReference>
<dbReference type="SMART" id="SM00874">
    <property type="entry name" value="B5"/>
    <property type="match status" value="1"/>
</dbReference>
<dbReference type="SMART" id="SM00896">
    <property type="entry name" value="FDX-ACB"/>
    <property type="match status" value="1"/>
</dbReference>
<dbReference type="SUPFAM" id="SSF54991">
    <property type="entry name" value="Anticodon-binding domain of PheRS"/>
    <property type="match status" value="1"/>
</dbReference>
<dbReference type="SUPFAM" id="SSF55681">
    <property type="entry name" value="Class II aaRS and biotin synthetases"/>
    <property type="match status" value="1"/>
</dbReference>
<dbReference type="SUPFAM" id="SSF50249">
    <property type="entry name" value="Nucleic acid-binding proteins"/>
    <property type="match status" value="1"/>
</dbReference>
<dbReference type="SUPFAM" id="SSF56037">
    <property type="entry name" value="PheT/TilS domain"/>
    <property type="match status" value="1"/>
</dbReference>
<dbReference type="SUPFAM" id="SSF46955">
    <property type="entry name" value="Putative DNA-binding domain"/>
    <property type="match status" value="2"/>
</dbReference>
<dbReference type="PROSITE" id="PS51483">
    <property type="entry name" value="B5"/>
    <property type="match status" value="1"/>
</dbReference>
<dbReference type="PROSITE" id="PS51447">
    <property type="entry name" value="FDX_ACB"/>
    <property type="match status" value="1"/>
</dbReference>
<dbReference type="PROSITE" id="PS50886">
    <property type="entry name" value="TRBD"/>
    <property type="match status" value="1"/>
</dbReference>
<gene>
    <name evidence="1" type="primary">pheT</name>
    <name type="ordered locus">TT_C1595</name>
</gene>
<evidence type="ECO:0000255" key="1">
    <source>
        <dbReference type="HAMAP-Rule" id="MF_00283"/>
    </source>
</evidence>
<sequence length="785" mass="86656">MRVPFSWLKAYVPELESPEVLEERLAGLGFETDRIERVFPIPRGVVFARVLEAHPIPGTRLKRLVLDAGQAVEVVSGAENARKGIGVALALPGTELPGLGQKVGERVIQGVRSFGMALSPRELGVGEYGGGLLEFPEDALPPGTPLAEAWPEEVVLDLEVTPNRPDALGLLGLARDLHALGYALVEPEAALKAEALPLPFALKVEDPEGAPHFTLGYAFGLRVAPSPLWMQRALFAAGMRPINNVVDVTNYVMLERAQPMHAFDLRFIGEGILVRRARPGERLRTLDGVERTLHPEDLVIAGWRGEESFPLGLAGVMGGAESEVREDTEAIALEVACFDPVSIRKTARRHGLRTEASHRFERGVDPLGQVPAQRRALSLLQALAGARVAEALLEAGSPKPPEAIPFRPEYANRLLGTSYPEAEQIAILKRLGCRVEGQGPAYRVTPPSHRLDLRLEEDLVEEVARIQGYETIPLALPAFFPAPDNRGVEAPYRKERRLRELLSGLGFQEVYTYSFMDPEDARRFRLDPPRLLLLNPLAPEKAALRTHLFPGLVRVLKENLDLDRPERALLFEVGRVFREREETHLAGLLFGEGVGLPWAKERLSGYFLLKGYLEALFARLGLAFRVEAQVFPFLHPGVSGRVLVEGEEVGFLGALHPEIAQELELPPVHLFELRLPLPDKPLAFQDPSRHPAAFRDLAVVVPAPTPYGEVEALVREAAGPYLESLVLFDLYQGPPLPEGHKSLAFHLRFRHPKRTLRDEEVEEAVSRVAEALRARGFGLRGLDTP</sequence>
<proteinExistence type="inferred from homology"/>
<name>SYFB_THET2</name>
<keyword id="KW-0030">Aminoacyl-tRNA synthetase</keyword>
<keyword id="KW-0067">ATP-binding</keyword>
<keyword id="KW-0963">Cytoplasm</keyword>
<keyword id="KW-0436">Ligase</keyword>
<keyword id="KW-0460">Magnesium</keyword>
<keyword id="KW-0479">Metal-binding</keyword>
<keyword id="KW-0547">Nucleotide-binding</keyword>
<keyword id="KW-0648">Protein biosynthesis</keyword>
<keyword id="KW-0694">RNA-binding</keyword>
<keyword id="KW-0820">tRNA-binding</keyword>
<organism>
    <name type="scientific">Thermus thermophilus (strain ATCC BAA-163 / DSM 7039 / HB27)</name>
    <dbReference type="NCBI Taxonomy" id="262724"/>
    <lineage>
        <taxon>Bacteria</taxon>
        <taxon>Thermotogati</taxon>
        <taxon>Deinococcota</taxon>
        <taxon>Deinococci</taxon>
        <taxon>Thermales</taxon>
        <taxon>Thermaceae</taxon>
        <taxon>Thermus</taxon>
    </lineage>
</organism>
<accession>Q72HA0</accession>
<feature type="chain" id="PRO_0000126976" description="Phenylalanine--tRNA ligase beta subunit">
    <location>
        <begin position="1"/>
        <end position="785"/>
    </location>
</feature>
<feature type="domain" description="tRNA-binding" evidence="1">
    <location>
        <begin position="39"/>
        <end position="147"/>
    </location>
</feature>
<feature type="domain" description="B5" evidence="1">
    <location>
        <begin position="399"/>
        <end position="474"/>
    </location>
</feature>
<feature type="domain" description="FDX-ACB" evidence="1">
    <location>
        <begin position="688"/>
        <end position="780"/>
    </location>
</feature>
<feature type="binding site" evidence="1">
    <location>
        <position position="452"/>
    </location>
    <ligand>
        <name>Mg(2+)</name>
        <dbReference type="ChEBI" id="CHEBI:18420"/>
        <note>shared with alpha subunit</note>
    </ligand>
</feature>
<feature type="binding site" evidence="1">
    <location>
        <position position="458"/>
    </location>
    <ligand>
        <name>Mg(2+)</name>
        <dbReference type="ChEBI" id="CHEBI:18420"/>
        <note>shared with alpha subunit</note>
    </ligand>
</feature>
<feature type="binding site" evidence="1">
    <location>
        <position position="461"/>
    </location>
    <ligand>
        <name>Mg(2+)</name>
        <dbReference type="ChEBI" id="CHEBI:18420"/>
        <note>shared with alpha subunit</note>
    </ligand>
</feature>
<feature type="binding site" evidence="1">
    <location>
        <position position="462"/>
    </location>
    <ligand>
        <name>Mg(2+)</name>
        <dbReference type="ChEBI" id="CHEBI:18420"/>
        <note>shared with alpha subunit</note>
    </ligand>
</feature>
<protein>
    <recommendedName>
        <fullName evidence="1">Phenylalanine--tRNA ligase beta subunit</fullName>
        <ecNumber evidence="1">6.1.1.20</ecNumber>
    </recommendedName>
    <alternativeName>
        <fullName evidence="1">Phenylalanyl-tRNA synthetase beta subunit</fullName>
        <shortName evidence="1">PheRS</shortName>
    </alternativeName>
</protein>
<comment type="catalytic activity">
    <reaction evidence="1">
        <text>tRNA(Phe) + L-phenylalanine + ATP = L-phenylalanyl-tRNA(Phe) + AMP + diphosphate + H(+)</text>
        <dbReference type="Rhea" id="RHEA:19413"/>
        <dbReference type="Rhea" id="RHEA-COMP:9668"/>
        <dbReference type="Rhea" id="RHEA-COMP:9699"/>
        <dbReference type="ChEBI" id="CHEBI:15378"/>
        <dbReference type="ChEBI" id="CHEBI:30616"/>
        <dbReference type="ChEBI" id="CHEBI:33019"/>
        <dbReference type="ChEBI" id="CHEBI:58095"/>
        <dbReference type="ChEBI" id="CHEBI:78442"/>
        <dbReference type="ChEBI" id="CHEBI:78531"/>
        <dbReference type="ChEBI" id="CHEBI:456215"/>
        <dbReference type="EC" id="6.1.1.20"/>
    </reaction>
</comment>
<comment type="cofactor">
    <cofactor evidence="1">
        <name>Mg(2+)</name>
        <dbReference type="ChEBI" id="CHEBI:18420"/>
    </cofactor>
    <text evidence="1">Binds 2 magnesium ions per tetramer.</text>
</comment>
<comment type="subunit">
    <text evidence="1">Tetramer of two alpha and two beta subunits.</text>
</comment>
<comment type="subcellular location">
    <subcellularLocation>
        <location evidence="1">Cytoplasm</location>
    </subcellularLocation>
</comment>
<comment type="similarity">
    <text evidence="1">Belongs to the phenylalanyl-tRNA synthetase beta subunit family. Type 1 subfamily.</text>
</comment>
<reference key="1">
    <citation type="journal article" date="2004" name="Nat. Biotechnol.">
        <title>The genome sequence of the extreme thermophile Thermus thermophilus.</title>
        <authorList>
            <person name="Henne A."/>
            <person name="Brueggemann H."/>
            <person name="Raasch C."/>
            <person name="Wiezer A."/>
            <person name="Hartsch T."/>
            <person name="Liesegang H."/>
            <person name="Johann A."/>
            <person name="Lienard T."/>
            <person name="Gohl O."/>
            <person name="Martinez-Arias R."/>
            <person name="Jacobi C."/>
            <person name="Starkuviene V."/>
            <person name="Schlenczeck S."/>
            <person name="Dencker S."/>
            <person name="Huber R."/>
            <person name="Klenk H.-P."/>
            <person name="Kramer W."/>
            <person name="Merkl R."/>
            <person name="Gottschalk G."/>
            <person name="Fritz H.-J."/>
        </authorList>
    </citation>
    <scope>NUCLEOTIDE SEQUENCE [LARGE SCALE GENOMIC DNA]</scope>
    <source>
        <strain>ATCC BAA-163 / DSM 7039 / HB27</strain>
    </source>
</reference>